<evidence type="ECO:0000255" key="1">
    <source>
        <dbReference type="HAMAP-Rule" id="MF_00251"/>
    </source>
</evidence>
<evidence type="ECO:0000305" key="2"/>
<sequence length="37" mass="4364">MKVRPSVKKMCDKCKVVRRKGVVRIICENPKHKQRQG</sequence>
<protein>
    <recommendedName>
        <fullName evidence="1">Large ribosomal subunit protein bL36</fullName>
    </recommendedName>
    <alternativeName>
        <fullName evidence="2">50S ribosomal protein L36</fullName>
    </alternativeName>
</protein>
<comment type="similarity">
    <text evidence="1">Belongs to the bacterial ribosomal protein bL36 family.</text>
</comment>
<reference key="1">
    <citation type="submission" date="2006-12" db="EMBL/GenBank/DDBJ databases">
        <authorList>
            <person name="Fouts D.E."/>
            <person name="Nelson K.E."/>
            <person name="Sebastian Y."/>
        </authorList>
    </citation>
    <scope>NUCLEOTIDE SEQUENCE [LARGE SCALE GENOMIC DNA]</scope>
    <source>
        <strain>81-176</strain>
    </source>
</reference>
<dbReference type="EMBL" id="CP000538">
    <property type="protein sequence ID" value="ABM55256.1"/>
    <property type="molecule type" value="Genomic_DNA"/>
</dbReference>
<dbReference type="RefSeq" id="WP_002781429.1">
    <property type="nucleotide sequence ID" value="NC_008787.1"/>
</dbReference>
<dbReference type="SMR" id="A1W1J3"/>
<dbReference type="GeneID" id="98394726"/>
<dbReference type="KEGG" id="cjj:CJJ81176_1754"/>
<dbReference type="eggNOG" id="COG0257">
    <property type="taxonomic scope" value="Bacteria"/>
</dbReference>
<dbReference type="HOGENOM" id="CLU_135723_6_2_7"/>
<dbReference type="Proteomes" id="UP000000646">
    <property type="component" value="Chromosome"/>
</dbReference>
<dbReference type="GO" id="GO:0005737">
    <property type="term" value="C:cytoplasm"/>
    <property type="evidence" value="ECO:0007669"/>
    <property type="project" value="UniProtKB-ARBA"/>
</dbReference>
<dbReference type="GO" id="GO:1990904">
    <property type="term" value="C:ribonucleoprotein complex"/>
    <property type="evidence" value="ECO:0007669"/>
    <property type="project" value="UniProtKB-KW"/>
</dbReference>
<dbReference type="GO" id="GO:0005840">
    <property type="term" value="C:ribosome"/>
    <property type="evidence" value="ECO:0007669"/>
    <property type="project" value="UniProtKB-KW"/>
</dbReference>
<dbReference type="GO" id="GO:0003735">
    <property type="term" value="F:structural constituent of ribosome"/>
    <property type="evidence" value="ECO:0007669"/>
    <property type="project" value="InterPro"/>
</dbReference>
<dbReference type="GO" id="GO:0006412">
    <property type="term" value="P:translation"/>
    <property type="evidence" value="ECO:0007669"/>
    <property type="project" value="UniProtKB-UniRule"/>
</dbReference>
<dbReference type="HAMAP" id="MF_00251">
    <property type="entry name" value="Ribosomal_bL36"/>
    <property type="match status" value="1"/>
</dbReference>
<dbReference type="InterPro" id="IPR000473">
    <property type="entry name" value="Ribosomal_bL36"/>
</dbReference>
<dbReference type="InterPro" id="IPR035977">
    <property type="entry name" value="Ribosomal_bL36_sp"/>
</dbReference>
<dbReference type="NCBIfam" id="TIGR01022">
    <property type="entry name" value="rpmJ_bact"/>
    <property type="match status" value="1"/>
</dbReference>
<dbReference type="PANTHER" id="PTHR42888">
    <property type="entry name" value="50S RIBOSOMAL PROTEIN L36, CHLOROPLASTIC"/>
    <property type="match status" value="1"/>
</dbReference>
<dbReference type="PANTHER" id="PTHR42888:SF1">
    <property type="entry name" value="LARGE RIBOSOMAL SUBUNIT PROTEIN BL36C"/>
    <property type="match status" value="1"/>
</dbReference>
<dbReference type="Pfam" id="PF00444">
    <property type="entry name" value="Ribosomal_L36"/>
    <property type="match status" value="1"/>
</dbReference>
<dbReference type="SUPFAM" id="SSF57840">
    <property type="entry name" value="Ribosomal protein L36"/>
    <property type="match status" value="1"/>
</dbReference>
<dbReference type="PROSITE" id="PS00828">
    <property type="entry name" value="RIBOSOMAL_L36"/>
    <property type="match status" value="1"/>
</dbReference>
<organism>
    <name type="scientific">Campylobacter jejuni subsp. jejuni serotype O:23/36 (strain 81-176)</name>
    <dbReference type="NCBI Taxonomy" id="354242"/>
    <lineage>
        <taxon>Bacteria</taxon>
        <taxon>Pseudomonadati</taxon>
        <taxon>Campylobacterota</taxon>
        <taxon>Epsilonproteobacteria</taxon>
        <taxon>Campylobacterales</taxon>
        <taxon>Campylobacteraceae</taxon>
        <taxon>Campylobacter</taxon>
    </lineage>
</organism>
<feature type="chain" id="PRO_0000302176" description="Large ribosomal subunit protein bL36">
    <location>
        <begin position="1"/>
        <end position="37"/>
    </location>
</feature>
<gene>
    <name evidence="1" type="primary">rpmJ</name>
    <name type="ordered locus">CJJ81176_1754</name>
</gene>
<accession>A1W1J3</accession>
<keyword id="KW-0687">Ribonucleoprotein</keyword>
<keyword id="KW-0689">Ribosomal protein</keyword>
<name>RL36_CAMJJ</name>
<proteinExistence type="inferred from homology"/>